<evidence type="ECO:0000255" key="1">
    <source>
        <dbReference type="HAMAP-Rule" id="MF_01382"/>
    </source>
</evidence>
<evidence type="ECO:0000256" key="2">
    <source>
        <dbReference type="SAM" id="MobiDB-lite"/>
    </source>
</evidence>
<accession>Q4L4H8</accession>
<comment type="function">
    <text evidence="1">Part of the Sec protein translocase complex. Interacts with the SecYEG preprotein conducting channel. Has a central role in coupling the hydrolysis of ATP to the transfer of proteins into and across the cell membrane, serving as an ATP-driven molecular motor driving the stepwise translocation of polypeptide chains across the membrane.</text>
</comment>
<comment type="catalytic activity">
    <reaction evidence="1">
        <text>ATP + H2O + cellular proteinSide 1 = ADP + phosphate + cellular proteinSide 2.</text>
        <dbReference type="EC" id="7.4.2.8"/>
    </reaction>
</comment>
<comment type="cofactor">
    <cofactor evidence="1">
        <name>Zn(2+)</name>
        <dbReference type="ChEBI" id="CHEBI:29105"/>
    </cofactor>
    <text evidence="1">May bind 1 zinc ion per subunit.</text>
</comment>
<comment type="subunit">
    <text evidence="1">Monomer and homodimer. Part of the essential Sec protein translocation apparatus which comprises SecA, SecYEG and auxiliary proteins SecDF. Other proteins may also be involved.</text>
</comment>
<comment type="subcellular location">
    <subcellularLocation>
        <location evidence="1">Cell membrane</location>
        <topology evidence="1">Peripheral membrane protein</topology>
        <orientation evidence="1">Cytoplasmic side</orientation>
    </subcellularLocation>
    <subcellularLocation>
        <location evidence="1">Cytoplasm</location>
    </subcellularLocation>
    <text evidence="1">Distribution is 50-50.</text>
</comment>
<comment type="similarity">
    <text evidence="1">Belongs to the SecA family.</text>
</comment>
<name>SECA1_STAHJ</name>
<proteinExistence type="inferred from homology"/>
<feature type="chain" id="PRO_0000109612" description="Protein translocase subunit SecA 1">
    <location>
        <begin position="1"/>
        <end position="845"/>
    </location>
</feature>
<feature type="region of interest" description="Disordered" evidence="2">
    <location>
        <begin position="795"/>
        <end position="845"/>
    </location>
</feature>
<feature type="compositionally biased region" description="Basic residues" evidence="2">
    <location>
        <begin position="835"/>
        <end position="845"/>
    </location>
</feature>
<feature type="binding site" evidence="1">
    <location>
        <position position="91"/>
    </location>
    <ligand>
        <name>ATP</name>
        <dbReference type="ChEBI" id="CHEBI:30616"/>
    </ligand>
</feature>
<feature type="binding site" evidence="1">
    <location>
        <begin position="109"/>
        <end position="113"/>
    </location>
    <ligand>
        <name>ATP</name>
        <dbReference type="ChEBI" id="CHEBI:30616"/>
    </ligand>
</feature>
<feature type="binding site" evidence="1">
    <location>
        <position position="498"/>
    </location>
    <ligand>
        <name>ATP</name>
        <dbReference type="ChEBI" id="CHEBI:30616"/>
    </ligand>
</feature>
<feature type="binding site" evidence="1">
    <location>
        <position position="829"/>
    </location>
    <ligand>
        <name>Zn(2+)</name>
        <dbReference type="ChEBI" id="CHEBI:29105"/>
    </ligand>
</feature>
<feature type="binding site" evidence="1">
    <location>
        <position position="831"/>
    </location>
    <ligand>
        <name>Zn(2+)</name>
        <dbReference type="ChEBI" id="CHEBI:29105"/>
    </ligand>
</feature>
<feature type="binding site" evidence="1">
    <location>
        <position position="840"/>
    </location>
    <ligand>
        <name>Zn(2+)</name>
        <dbReference type="ChEBI" id="CHEBI:29105"/>
    </ligand>
</feature>
<feature type="binding site" evidence="1">
    <location>
        <position position="841"/>
    </location>
    <ligand>
        <name>Zn(2+)</name>
        <dbReference type="ChEBI" id="CHEBI:29105"/>
    </ligand>
</feature>
<sequence length="845" mass="96288">MGFLSKIVDGNKKETKRLSKIADEVLSLEEDMAILTDEEIKNKTKQFQQEVQEIEDVKKQNDYLDKILPQAYALVREGAKRVFNMTPYKVQVMGGIAIHKGDIAEMRTGEGKTLTATMPTYLNALAGRGVHVITVNEYLSSVQSEEMAELYEFLGLTVGLNLNSKSTNEKREAYAQDITYSTNNELGFDYLRDNMVNYAEERVMRPLHFAIIDEVDSILIDEARTPLIISGEAEKSTSLYTQANVFAKMLKAEDDYKYDEKTKAVHLTEQGADKAERMFKIENLYDVQNVEVISHINTALKAHVTLQRDVDYMVVDGEVLIVDQFTGRTMPGRRFSEGLHQAIEAKEGVKIQNESKTMASITFQNYFRMYNKLAGMTGTAKTEEEEFRNIYNMTVTQIPTNKPVQRDDKSDLIYISQKGKFDAVVEDVVEKHKQGQPVLLGTVAVETSEYISNLLKKRGIRHDVLNAKNHEREAEIVANAGQKGAVTIATNMAGRGTDIKLGEGVEEIGGLAVIGTERHESRRIDDQLRGRSGRQGDRGDSRFYLSLQDELMVRFGSERLQKMMNRLGMDDSTPIESKMVSRAVESAQKRVEGNNFDARKRILEYDEVLRKQREIIYNERNNIIDSEDSSQLVNAMLRSTLQRGVTYHISEEDDNPDYAPFINYVNDVFLQEGDLKEEEINGKDSEDIFEVVWSKIEKVYESQKAKIGDQMAEFERMILLRSIDTHWTDHIDTMDQLRQGIHLRSYAQQNPLRDYQNEGHELFDMMMQNIEEDTSKFILKSVIQVDENIEREKTTDFGTAQHVSAEDGKEKAKKQPIVKGDKVGRNDPCPCGSGKKYKNCHGKEE</sequence>
<organism>
    <name type="scientific">Staphylococcus haemolyticus (strain JCSC1435)</name>
    <dbReference type="NCBI Taxonomy" id="279808"/>
    <lineage>
        <taxon>Bacteria</taxon>
        <taxon>Bacillati</taxon>
        <taxon>Bacillota</taxon>
        <taxon>Bacilli</taxon>
        <taxon>Bacillales</taxon>
        <taxon>Staphylococcaceae</taxon>
        <taxon>Staphylococcus</taxon>
    </lineage>
</organism>
<reference key="1">
    <citation type="journal article" date="2005" name="J. Bacteriol.">
        <title>Whole-genome sequencing of Staphylococcus haemolyticus uncovers the extreme plasticity of its genome and the evolution of human-colonizing staphylococcal species.</title>
        <authorList>
            <person name="Takeuchi F."/>
            <person name="Watanabe S."/>
            <person name="Baba T."/>
            <person name="Yuzawa H."/>
            <person name="Ito T."/>
            <person name="Morimoto Y."/>
            <person name="Kuroda M."/>
            <person name="Cui L."/>
            <person name="Takahashi M."/>
            <person name="Ankai A."/>
            <person name="Baba S."/>
            <person name="Fukui S."/>
            <person name="Lee J.C."/>
            <person name="Hiramatsu K."/>
        </authorList>
    </citation>
    <scope>NUCLEOTIDE SEQUENCE [LARGE SCALE GENOMIC DNA]</scope>
    <source>
        <strain>JCSC1435</strain>
    </source>
</reference>
<gene>
    <name evidence="1" type="primary">secA1</name>
    <name type="ordered locus">SH2138</name>
</gene>
<keyword id="KW-0067">ATP-binding</keyword>
<keyword id="KW-1003">Cell membrane</keyword>
<keyword id="KW-0963">Cytoplasm</keyword>
<keyword id="KW-0472">Membrane</keyword>
<keyword id="KW-0479">Metal-binding</keyword>
<keyword id="KW-0547">Nucleotide-binding</keyword>
<keyword id="KW-0653">Protein transport</keyword>
<keyword id="KW-1278">Translocase</keyword>
<keyword id="KW-0811">Translocation</keyword>
<keyword id="KW-0813">Transport</keyword>
<keyword id="KW-0862">Zinc</keyword>
<dbReference type="EC" id="7.4.2.8" evidence="1"/>
<dbReference type="EMBL" id="AP006716">
    <property type="protein sequence ID" value="BAE05447.1"/>
    <property type="molecule type" value="Genomic_DNA"/>
</dbReference>
<dbReference type="RefSeq" id="WP_011276400.1">
    <property type="nucleotide sequence ID" value="NC_007168.1"/>
</dbReference>
<dbReference type="SMR" id="Q4L4H8"/>
<dbReference type="KEGG" id="sha:SH2138"/>
<dbReference type="eggNOG" id="COG0653">
    <property type="taxonomic scope" value="Bacteria"/>
</dbReference>
<dbReference type="HOGENOM" id="CLU_005314_3_0_9"/>
<dbReference type="OrthoDB" id="9805579at2"/>
<dbReference type="Proteomes" id="UP000000543">
    <property type="component" value="Chromosome"/>
</dbReference>
<dbReference type="GO" id="GO:0031522">
    <property type="term" value="C:cell envelope Sec protein transport complex"/>
    <property type="evidence" value="ECO:0007669"/>
    <property type="project" value="TreeGrafter"/>
</dbReference>
<dbReference type="GO" id="GO:0005829">
    <property type="term" value="C:cytosol"/>
    <property type="evidence" value="ECO:0007669"/>
    <property type="project" value="TreeGrafter"/>
</dbReference>
<dbReference type="GO" id="GO:0005886">
    <property type="term" value="C:plasma membrane"/>
    <property type="evidence" value="ECO:0007669"/>
    <property type="project" value="UniProtKB-SubCell"/>
</dbReference>
<dbReference type="GO" id="GO:0005524">
    <property type="term" value="F:ATP binding"/>
    <property type="evidence" value="ECO:0007669"/>
    <property type="project" value="UniProtKB-UniRule"/>
</dbReference>
<dbReference type="GO" id="GO:0046872">
    <property type="term" value="F:metal ion binding"/>
    <property type="evidence" value="ECO:0007669"/>
    <property type="project" value="UniProtKB-KW"/>
</dbReference>
<dbReference type="GO" id="GO:0008564">
    <property type="term" value="F:protein-exporting ATPase activity"/>
    <property type="evidence" value="ECO:0007669"/>
    <property type="project" value="UniProtKB-EC"/>
</dbReference>
<dbReference type="GO" id="GO:0065002">
    <property type="term" value="P:intracellular protein transmembrane transport"/>
    <property type="evidence" value="ECO:0007669"/>
    <property type="project" value="UniProtKB-UniRule"/>
</dbReference>
<dbReference type="GO" id="GO:0017038">
    <property type="term" value="P:protein import"/>
    <property type="evidence" value="ECO:0007669"/>
    <property type="project" value="InterPro"/>
</dbReference>
<dbReference type="GO" id="GO:0006605">
    <property type="term" value="P:protein targeting"/>
    <property type="evidence" value="ECO:0007669"/>
    <property type="project" value="UniProtKB-UniRule"/>
</dbReference>
<dbReference type="GO" id="GO:0043952">
    <property type="term" value="P:protein transport by the Sec complex"/>
    <property type="evidence" value="ECO:0007669"/>
    <property type="project" value="TreeGrafter"/>
</dbReference>
<dbReference type="CDD" id="cd17928">
    <property type="entry name" value="DEXDc_SecA"/>
    <property type="match status" value="1"/>
</dbReference>
<dbReference type="CDD" id="cd18803">
    <property type="entry name" value="SF2_C_secA"/>
    <property type="match status" value="1"/>
</dbReference>
<dbReference type="FunFam" id="3.40.50.300:FF:000694">
    <property type="entry name" value="Preprotein translocase subunit SecA"/>
    <property type="match status" value="1"/>
</dbReference>
<dbReference type="FunFam" id="3.90.1440.10:FF:000002">
    <property type="entry name" value="Protein translocase subunit SecA"/>
    <property type="match status" value="1"/>
</dbReference>
<dbReference type="Gene3D" id="1.10.3060.10">
    <property type="entry name" value="Helical scaffold and wing domains of SecA"/>
    <property type="match status" value="1"/>
</dbReference>
<dbReference type="Gene3D" id="3.40.50.300">
    <property type="entry name" value="P-loop containing nucleotide triphosphate hydrolases"/>
    <property type="match status" value="2"/>
</dbReference>
<dbReference type="Gene3D" id="3.90.1440.10">
    <property type="entry name" value="SecA, preprotein cross-linking domain"/>
    <property type="match status" value="1"/>
</dbReference>
<dbReference type="HAMAP" id="MF_01382">
    <property type="entry name" value="SecA"/>
    <property type="match status" value="1"/>
</dbReference>
<dbReference type="InterPro" id="IPR014001">
    <property type="entry name" value="Helicase_ATP-bd"/>
</dbReference>
<dbReference type="InterPro" id="IPR001650">
    <property type="entry name" value="Helicase_C-like"/>
</dbReference>
<dbReference type="InterPro" id="IPR027417">
    <property type="entry name" value="P-loop_NTPase"/>
</dbReference>
<dbReference type="InterPro" id="IPR004027">
    <property type="entry name" value="SEC_C_motif"/>
</dbReference>
<dbReference type="InterPro" id="IPR000185">
    <property type="entry name" value="SecA"/>
</dbReference>
<dbReference type="InterPro" id="IPR020937">
    <property type="entry name" value="SecA_CS"/>
</dbReference>
<dbReference type="InterPro" id="IPR011115">
    <property type="entry name" value="SecA_DEAD"/>
</dbReference>
<dbReference type="InterPro" id="IPR014018">
    <property type="entry name" value="SecA_motor_DEAD"/>
</dbReference>
<dbReference type="InterPro" id="IPR011130">
    <property type="entry name" value="SecA_preprotein_X-link_dom"/>
</dbReference>
<dbReference type="InterPro" id="IPR044722">
    <property type="entry name" value="SecA_SF2_C"/>
</dbReference>
<dbReference type="InterPro" id="IPR011116">
    <property type="entry name" value="SecA_Wing/Scaffold"/>
</dbReference>
<dbReference type="InterPro" id="IPR036266">
    <property type="entry name" value="SecA_Wing/Scaffold_sf"/>
</dbReference>
<dbReference type="InterPro" id="IPR036670">
    <property type="entry name" value="SecA_X-link_sf"/>
</dbReference>
<dbReference type="NCBIfam" id="NF006630">
    <property type="entry name" value="PRK09200.1"/>
    <property type="match status" value="1"/>
</dbReference>
<dbReference type="NCBIfam" id="TIGR00963">
    <property type="entry name" value="secA"/>
    <property type="match status" value="1"/>
</dbReference>
<dbReference type="PANTHER" id="PTHR30612:SF0">
    <property type="entry name" value="CHLOROPLAST PROTEIN-TRANSPORTING ATPASE"/>
    <property type="match status" value="1"/>
</dbReference>
<dbReference type="PANTHER" id="PTHR30612">
    <property type="entry name" value="SECA INNER MEMBRANE COMPONENT OF SEC PROTEIN SECRETION SYSTEM"/>
    <property type="match status" value="1"/>
</dbReference>
<dbReference type="Pfam" id="PF21090">
    <property type="entry name" value="P-loop_SecA"/>
    <property type="match status" value="1"/>
</dbReference>
<dbReference type="Pfam" id="PF02810">
    <property type="entry name" value="SEC-C"/>
    <property type="match status" value="1"/>
</dbReference>
<dbReference type="Pfam" id="PF07517">
    <property type="entry name" value="SecA_DEAD"/>
    <property type="match status" value="1"/>
</dbReference>
<dbReference type="Pfam" id="PF01043">
    <property type="entry name" value="SecA_PP_bind"/>
    <property type="match status" value="1"/>
</dbReference>
<dbReference type="Pfam" id="PF07516">
    <property type="entry name" value="SecA_SW"/>
    <property type="match status" value="1"/>
</dbReference>
<dbReference type="PRINTS" id="PR00906">
    <property type="entry name" value="SECA"/>
</dbReference>
<dbReference type="SMART" id="SM00957">
    <property type="entry name" value="SecA_DEAD"/>
    <property type="match status" value="1"/>
</dbReference>
<dbReference type="SMART" id="SM00958">
    <property type="entry name" value="SecA_PP_bind"/>
    <property type="match status" value="1"/>
</dbReference>
<dbReference type="SUPFAM" id="SSF81886">
    <property type="entry name" value="Helical scaffold and wing domains of SecA"/>
    <property type="match status" value="1"/>
</dbReference>
<dbReference type="SUPFAM" id="SSF52540">
    <property type="entry name" value="P-loop containing nucleoside triphosphate hydrolases"/>
    <property type="match status" value="2"/>
</dbReference>
<dbReference type="SUPFAM" id="SSF81767">
    <property type="entry name" value="Pre-protein crosslinking domain of SecA"/>
    <property type="match status" value="1"/>
</dbReference>
<dbReference type="PROSITE" id="PS01312">
    <property type="entry name" value="SECA"/>
    <property type="match status" value="1"/>
</dbReference>
<dbReference type="PROSITE" id="PS51196">
    <property type="entry name" value="SECA_MOTOR_DEAD"/>
    <property type="match status" value="1"/>
</dbReference>
<protein>
    <recommendedName>
        <fullName evidence="1">Protein translocase subunit SecA 1</fullName>
        <ecNumber evidence="1">7.4.2.8</ecNumber>
    </recommendedName>
</protein>